<comment type="function">
    <text evidence="1">Catalyzes the formation of 6,7-dimethyl-8-ribityllumazine by condensation of 5-amino-6-(D-ribitylamino)uracil with 3,4-dihydroxy-2-butanone 4-phosphate. This is the penultimate step in the biosynthesis of riboflavin.</text>
</comment>
<comment type="catalytic activity">
    <reaction evidence="1">
        <text>(2S)-2-hydroxy-3-oxobutyl phosphate + 5-amino-6-(D-ribitylamino)uracil = 6,7-dimethyl-8-(1-D-ribityl)lumazine + phosphate + 2 H2O + H(+)</text>
        <dbReference type="Rhea" id="RHEA:26152"/>
        <dbReference type="ChEBI" id="CHEBI:15377"/>
        <dbReference type="ChEBI" id="CHEBI:15378"/>
        <dbReference type="ChEBI" id="CHEBI:15934"/>
        <dbReference type="ChEBI" id="CHEBI:43474"/>
        <dbReference type="ChEBI" id="CHEBI:58201"/>
        <dbReference type="ChEBI" id="CHEBI:58830"/>
        <dbReference type="EC" id="2.5.1.78"/>
    </reaction>
</comment>
<comment type="pathway">
    <text evidence="1">Cofactor biosynthesis; riboflavin biosynthesis; riboflavin from 2-hydroxy-3-oxobutyl phosphate and 5-amino-6-(D-ribitylamino)uracil: step 1/2.</text>
</comment>
<comment type="similarity">
    <text evidence="1">Belongs to the DMRL synthase family.</text>
</comment>
<feature type="chain" id="PRO_1000040417" description="6,7-dimethyl-8-ribityllumazine synthase">
    <location>
        <begin position="1"/>
        <end position="156"/>
    </location>
</feature>
<feature type="active site" description="Proton donor" evidence="1">
    <location>
        <position position="91"/>
    </location>
</feature>
<feature type="binding site" evidence="1">
    <location>
        <position position="25"/>
    </location>
    <ligand>
        <name>5-amino-6-(D-ribitylamino)uracil</name>
        <dbReference type="ChEBI" id="CHEBI:15934"/>
    </ligand>
</feature>
<feature type="binding site" evidence="1">
    <location>
        <begin position="59"/>
        <end position="61"/>
    </location>
    <ligand>
        <name>5-amino-6-(D-ribitylamino)uracil</name>
        <dbReference type="ChEBI" id="CHEBI:15934"/>
    </ligand>
</feature>
<feature type="binding site" evidence="1">
    <location>
        <begin position="83"/>
        <end position="85"/>
    </location>
    <ligand>
        <name>5-amino-6-(D-ribitylamino)uracil</name>
        <dbReference type="ChEBI" id="CHEBI:15934"/>
    </ligand>
</feature>
<feature type="binding site" evidence="1">
    <location>
        <begin position="88"/>
        <end position="89"/>
    </location>
    <ligand>
        <name>(2S)-2-hydroxy-3-oxobutyl phosphate</name>
        <dbReference type="ChEBI" id="CHEBI:58830"/>
    </ligand>
</feature>
<feature type="binding site" evidence="1">
    <location>
        <position position="116"/>
    </location>
    <ligand>
        <name>5-amino-6-(D-ribitylamino)uracil</name>
        <dbReference type="ChEBI" id="CHEBI:15934"/>
    </ligand>
</feature>
<feature type="binding site" evidence="1">
    <location>
        <position position="130"/>
    </location>
    <ligand>
        <name>(2S)-2-hydroxy-3-oxobutyl phosphate</name>
        <dbReference type="ChEBI" id="CHEBI:58830"/>
    </ligand>
</feature>
<organism>
    <name type="scientific">Nitratidesulfovibrio vulgaris (strain DP4)</name>
    <name type="common">Desulfovibrio vulgaris</name>
    <dbReference type="NCBI Taxonomy" id="391774"/>
    <lineage>
        <taxon>Bacteria</taxon>
        <taxon>Pseudomonadati</taxon>
        <taxon>Thermodesulfobacteriota</taxon>
        <taxon>Desulfovibrionia</taxon>
        <taxon>Desulfovibrionales</taxon>
        <taxon>Desulfovibrionaceae</taxon>
        <taxon>Nitratidesulfovibrio</taxon>
    </lineage>
</organism>
<dbReference type="EC" id="2.5.1.78" evidence="1"/>
<dbReference type="EMBL" id="CP000527">
    <property type="protein sequence ID" value="ABM28876.1"/>
    <property type="molecule type" value="Genomic_DNA"/>
</dbReference>
<dbReference type="SMR" id="A1VEL0"/>
<dbReference type="KEGG" id="dvl:Dvul_1859"/>
<dbReference type="HOGENOM" id="CLU_089358_1_1_7"/>
<dbReference type="UniPathway" id="UPA00275">
    <property type="reaction ID" value="UER00404"/>
</dbReference>
<dbReference type="Proteomes" id="UP000009173">
    <property type="component" value="Chromosome"/>
</dbReference>
<dbReference type="GO" id="GO:0005829">
    <property type="term" value="C:cytosol"/>
    <property type="evidence" value="ECO:0007669"/>
    <property type="project" value="TreeGrafter"/>
</dbReference>
<dbReference type="GO" id="GO:0009349">
    <property type="term" value="C:riboflavin synthase complex"/>
    <property type="evidence" value="ECO:0007669"/>
    <property type="project" value="InterPro"/>
</dbReference>
<dbReference type="GO" id="GO:0000906">
    <property type="term" value="F:6,7-dimethyl-8-ribityllumazine synthase activity"/>
    <property type="evidence" value="ECO:0007669"/>
    <property type="project" value="UniProtKB-UniRule"/>
</dbReference>
<dbReference type="GO" id="GO:0009231">
    <property type="term" value="P:riboflavin biosynthetic process"/>
    <property type="evidence" value="ECO:0007669"/>
    <property type="project" value="UniProtKB-UniRule"/>
</dbReference>
<dbReference type="CDD" id="cd09209">
    <property type="entry name" value="Lumazine_synthase-I"/>
    <property type="match status" value="1"/>
</dbReference>
<dbReference type="FunFam" id="3.40.50.960:FF:000001">
    <property type="entry name" value="6,7-dimethyl-8-ribityllumazine synthase"/>
    <property type="match status" value="1"/>
</dbReference>
<dbReference type="Gene3D" id="3.40.50.960">
    <property type="entry name" value="Lumazine/riboflavin synthase"/>
    <property type="match status" value="1"/>
</dbReference>
<dbReference type="HAMAP" id="MF_00178">
    <property type="entry name" value="Lumazine_synth"/>
    <property type="match status" value="1"/>
</dbReference>
<dbReference type="InterPro" id="IPR034964">
    <property type="entry name" value="LS"/>
</dbReference>
<dbReference type="InterPro" id="IPR002180">
    <property type="entry name" value="LS/RS"/>
</dbReference>
<dbReference type="InterPro" id="IPR036467">
    <property type="entry name" value="LS/RS_sf"/>
</dbReference>
<dbReference type="NCBIfam" id="TIGR00114">
    <property type="entry name" value="lumazine-synth"/>
    <property type="match status" value="1"/>
</dbReference>
<dbReference type="NCBIfam" id="NF000812">
    <property type="entry name" value="PRK00061.1-4"/>
    <property type="match status" value="1"/>
</dbReference>
<dbReference type="PANTHER" id="PTHR21058:SF0">
    <property type="entry name" value="6,7-DIMETHYL-8-RIBITYLLUMAZINE SYNTHASE"/>
    <property type="match status" value="1"/>
</dbReference>
<dbReference type="PANTHER" id="PTHR21058">
    <property type="entry name" value="6,7-DIMETHYL-8-RIBITYLLUMAZINE SYNTHASE DMRL SYNTHASE LUMAZINE SYNTHASE"/>
    <property type="match status" value="1"/>
</dbReference>
<dbReference type="Pfam" id="PF00885">
    <property type="entry name" value="DMRL_synthase"/>
    <property type="match status" value="1"/>
</dbReference>
<dbReference type="SUPFAM" id="SSF52121">
    <property type="entry name" value="Lumazine synthase"/>
    <property type="match status" value="1"/>
</dbReference>
<proteinExistence type="inferred from homology"/>
<evidence type="ECO:0000255" key="1">
    <source>
        <dbReference type="HAMAP-Rule" id="MF_00178"/>
    </source>
</evidence>
<accession>A1VEL0</accession>
<gene>
    <name evidence="1" type="primary">ribH</name>
    <name type="ordered locus">Dvul_1859</name>
</gene>
<keyword id="KW-0686">Riboflavin biosynthesis</keyword>
<keyword id="KW-0808">Transferase</keyword>
<sequence>MLHIKTIEGQLDAKGLKFAIVATRFNDFIVDRLIGGACDYLQRHGCDRENLTIVRIPGAFEMPLVAKKLAHSGKYDGIIALGAVIRGATPHFDFVSNEASKGLAQACLESGVPLGFGLLTTDNIEQAIERAGSKAGNKGAEAAAAVLETVRVMEQL</sequence>
<name>RISB_NITV4</name>
<protein>
    <recommendedName>
        <fullName evidence="1">6,7-dimethyl-8-ribityllumazine synthase</fullName>
        <shortName evidence="1">DMRL synthase</shortName>
        <shortName evidence="1">LS</shortName>
        <shortName evidence="1">Lumazine synthase</shortName>
        <ecNumber evidence="1">2.5.1.78</ecNumber>
    </recommendedName>
</protein>
<reference key="1">
    <citation type="journal article" date="2009" name="Environ. Microbiol.">
        <title>Contribution of mobile genetic elements to Desulfovibrio vulgaris genome plasticity.</title>
        <authorList>
            <person name="Walker C.B."/>
            <person name="Stolyar S."/>
            <person name="Chivian D."/>
            <person name="Pinel N."/>
            <person name="Gabster J.A."/>
            <person name="Dehal P.S."/>
            <person name="He Z."/>
            <person name="Yang Z.K."/>
            <person name="Yen H.C."/>
            <person name="Zhou J."/>
            <person name="Wall J.D."/>
            <person name="Hazen T.C."/>
            <person name="Arkin A.P."/>
            <person name="Stahl D.A."/>
        </authorList>
    </citation>
    <scope>NUCLEOTIDE SEQUENCE [LARGE SCALE GENOMIC DNA]</scope>
    <source>
        <strain>DP4</strain>
    </source>
</reference>